<dbReference type="EC" id="3.1.3.16" evidence="4"/>
<dbReference type="EMBL" id="M20192">
    <property type="protein sequence ID" value="AAA30981.1"/>
    <property type="molecule type" value="mRNA"/>
</dbReference>
<dbReference type="PIR" id="A27430">
    <property type="entry name" value="A27430"/>
</dbReference>
<dbReference type="RefSeq" id="NP_999531.1">
    <property type="nucleotide sequence ID" value="NM_214366.1"/>
</dbReference>
<dbReference type="SMR" id="P67776"/>
<dbReference type="CORUM" id="P67776"/>
<dbReference type="FunCoup" id="P67776">
    <property type="interactions" value="2761"/>
</dbReference>
<dbReference type="STRING" id="9823.ENSSSCP00000015208"/>
<dbReference type="iPTMnet" id="P67776"/>
<dbReference type="PeptideAtlas" id="P67776"/>
<dbReference type="Ensembl" id="ENSSSCT00000015621.5">
    <property type="protein sequence ID" value="ENSSSCP00000015208.3"/>
    <property type="gene ID" value="ENSSSCG00000014298.5"/>
</dbReference>
<dbReference type="Ensembl" id="ENSSSCT00015031907.1">
    <property type="protein sequence ID" value="ENSSSCP00015012660.1"/>
    <property type="gene ID" value="ENSSSCG00015024027.1"/>
</dbReference>
<dbReference type="Ensembl" id="ENSSSCT00025067102.1">
    <property type="protein sequence ID" value="ENSSSCP00025028701.1"/>
    <property type="gene ID" value="ENSSSCG00025049272.1"/>
</dbReference>
<dbReference type="Ensembl" id="ENSSSCT00030006853.1">
    <property type="protein sequence ID" value="ENSSSCP00030003069.1"/>
    <property type="gene ID" value="ENSSSCG00030005027.1"/>
</dbReference>
<dbReference type="Ensembl" id="ENSSSCT00035070097.1">
    <property type="protein sequence ID" value="ENSSSCP00035028434.1"/>
    <property type="gene ID" value="ENSSSCG00035052570.1"/>
</dbReference>
<dbReference type="Ensembl" id="ENSSSCT00040079016.1">
    <property type="protein sequence ID" value="ENSSSCP00040034100.1"/>
    <property type="gene ID" value="ENSSSCG00040058228.1"/>
</dbReference>
<dbReference type="Ensembl" id="ENSSSCT00045024477.1">
    <property type="protein sequence ID" value="ENSSSCP00045016913.1"/>
    <property type="gene ID" value="ENSSSCG00045014363.1"/>
</dbReference>
<dbReference type="Ensembl" id="ENSSSCT00050100322.1">
    <property type="protein sequence ID" value="ENSSSCP00050043515.1"/>
    <property type="gene ID" value="ENSSSCG00050073394.1"/>
</dbReference>
<dbReference type="Ensembl" id="ENSSSCT00055021387.1">
    <property type="protein sequence ID" value="ENSSSCP00055016941.1"/>
    <property type="gene ID" value="ENSSSCG00055010854.1"/>
</dbReference>
<dbReference type="Ensembl" id="ENSSSCT00055021414.1">
    <property type="protein sequence ID" value="ENSSSCP00055016964.1"/>
    <property type="gene ID" value="ENSSSCG00055010854.1"/>
</dbReference>
<dbReference type="Ensembl" id="ENSSSCT00060062308.1">
    <property type="protein sequence ID" value="ENSSSCP00060026688.1"/>
    <property type="gene ID" value="ENSSSCG00060045924.1"/>
</dbReference>
<dbReference type="Ensembl" id="ENSSSCT00065074223.1">
    <property type="protein sequence ID" value="ENSSSCP00065032333.1"/>
    <property type="gene ID" value="ENSSSCG00065054140.1"/>
</dbReference>
<dbReference type="Ensembl" id="ENSSSCT00065074230.1">
    <property type="protein sequence ID" value="ENSSSCP00065032339.1"/>
    <property type="gene ID" value="ENSSSCG00065054140.1"/>
</dbReference>
<dbReference type="Ensembl" id="ENSSSCT00070040758.1">
    <property type="protein sequence ID" value="ENSSSCP00070034202.1"/>
    <property type="gene ID" value="ENSSSCG00070020508.1"/>
</dbReference>
<dbReference type="Ensembl" id="ENSSSCT00085049864">
    <property type="protein sequence ID" value="ENSSSCP00085034868"/>
    <property type="gene ID" value="ENSSSCG00085025964"/>
</dbReference>
<dbReference type="Ensembl" id="ENSSSCT00090052844">
    <property type="protein sequence ID" value="ENSSSCP00090032904"/>
    <property type="gene ID" value="ENSSSCG00090029853"/>
</dbReference>
<dbReference type="Ensembl" id="ENSSSCT00105053525">
    <property type="protein sequence ID" value="ENSSSCP00105037565"/>
    <property type="gene ID" value="ENSSSCG00105028156"/>
</dbReference>
<dbReference type="Ensembl" id="ENSSSCT00110017883">
    <property type="protein sequence ID" value="ENSSSCP00110012252"/>
    <property type="gene ID" value="ENSSSCG00110009208"/>
</dbReference>
<dbReference type="Ensembl" id="ENSSSCT00115026961">
    <property type="protein sequence ID" value="ENSSSCP00115025548"/>
    <property type="gene ID" value="ENSSSCG00115015459"/>
</dbReference>
<dbReference type="Ensembl" id="ENSSSCT00130061548">
    <property type="protein sequence ID" value="ENSSSCP00130044087"/>
    <property type="gene ID" value="ENSSSCG00130031523"/>
</dbReference>
<dbReference type="GeneID" id="397656"/>
<dbReference type="KEGG" id="ssc:397656"/>
<dbReference type="CTD" id="5515"/>
<dbReference type="VGNC" id="VGNC:91745">
    <property type="gene designation" value="PPP2CA"/>
</dbReference>
<dbReference type="GeneTree" id="ENSGT00550000074618"/>
<dbReference type="InParanoid" id="P67776"/>
<dbReference type="OMA" id="CMKVRYP"/>
<dbReference type="OrthoDB" id="1930084at2759"/>
<dbReference type="Reactome" id="R-SSC-113501">
    <property type="pathway name" value="Inhibition of replication initiation of damaged DNA by RB1/E2F1"/>
</dbReference>
<dbReference type="Reactome" id="R-SSC-1295596">
    <property type="pathway name" value="Spry regulation of FGF signaling"/>
</dbReference>
<dbReference type="Reactome" id="R-SSC-141444">
    <property type="pathway name" value="Amplification of signal from unattached kinetochores via a MAD2 inhibitory signal"/>
</dbReference>
<dbReference type="Reactome" id="R-SSC-180024">
    <property type="pathway name" value="DARPP-32 events"/>
</dbReference>
<dbReference type="Reactome" id="R-SSC-195253">
    <property type="pathway name" value="Degradation of beta-catenin by the destruction complex"/>
</dbReference>
<dbReference type="Reactome" id="R-SSC-196299">
    <property type="pathway name" value="Beta-catenin phosphorylation cascade"/>
</dbReference>
<dbReference type="Reactome" id="R-SSC-198753">
    <property type="pathway name" value="ERK/MAPK targets"/>
</dbReference>
<dbReference type="Reactome" id="R-SSC-202670">
    <property type="pathway name" value="ERKs are inactivated"/>
</dbReference>
<dbReference type="Reactome" id="R-SSC-2467813">
    <property type="pathway name" value="Separation of Sister Chromatids"/>
</dbReference>
<dbReference type="Reactome" id="R-SSC-2500257">
    <property type="pathway name" value="Resolution of Sister Chromatid Cohesion"/>
</dbReference>
<dbReference type="Reactome" id="R-SSC-2995383">
    <property type="pathway name" value="Initiation of Nuclear Envelope (NE) Reformation"/>
</dbReference>
<dbReference type="Reactome" id="R-SSC-389356">
    <property type="pathway name" value="Co-stimulation by CD28"/>
</dbReference>
<dbReference type="Reactome" id="R-SSC-389513">
    <property type="pathway name" value="Co-inhibition by CTLA4"/>
</dbReference>
<dbReference type="Reactome" id="R-SSC-432142">
    <property type="pathway name" value="Platelet sensitization by LDL"/>
</dbReference>
<dbReference type="Reactome" id="R-SSC-4641262">
    <property type="pathway name" value="Disassembly of the destruction complex and recruitment of AXIN to the membrane"/>
</dbReference>
<dbReference type="Reactome" id="R-SSC-5663220">
    <property type="pathway name" value="RHO GTPases Activate Formins"/>
</dbReference>
<dbReference type="Reactome" id="R-SSC-5673000">
    <property type="pathway name" value="RAF activation"/>
</dbReference>
<dbReference type="Reactome" id="R-SSC-5675221">
    <property type="pathway name" value="Negative regulation of MAPK pathway"/>
</dbReference>
<dbReference type="Reactome" id="R-SSC-6804757">
    <property type="pathway name" value="Regulation of TP53 Degradation"/>
</dbReference>
<dbReference type="Reactome" id="R-SSC-6811558">
    <property type="pathway name" value="PI5P, PP2A and IER3 Regulate PI3K/AKT Signaling"/>
</dbReference>
<dbReference type="Reactome" id="R-SSC-68877">
    <property type="pathway name" value="Mitotic Prometaphase"/>
</dbReference>
<dbReference type="Reactome" id="R-SSC-69231">
    <property type="pathway name" value="Cyclin D associated events in G1"/>
</dbReference>
<dbReference type="Reactome" id="R-SSC-69273">
    <property type="pathway name" value="Cyclin A/B1/B2 associated events during G2/M transition"/>
</dbReference>
<dbReference type="Reactome" id="R-SSC-9648025">
    <property type="pathway name" value="EML4 and NUDC in mitotic spindle formation"/>
</dbReference>
<dbReference type="Reactome" id="R-SSC-975957">
    <property type="pathway name" value="Nonsense Mediated Decay (NMD) enhanced by the Exon Junction Complex (EJC)"/>
</dbReference>
<dbReference type="Reactome" id="R-SSC-9833482">
    <property type="pathway name" value="PKR-mediated signaling"/>
</dbReference>
<dbReference type="Reactome" id="R-SSC-9860927">
    <property type="pathway name" value="Turbulent (oscillatory, disturbed) flow shear stress activates signaling by PIEZO1 and integrins in endothelial cells"/>
</dbReference>
<dbReference type="Proteomes" id="UP000008227">
    <property type="component" value="Chromosome 2"/>
</dbReference>
<dbReference type="Proteomes" id="UP000314985">
    <property type="component" value="Chromosome 2"/>
</dbReference>
<dbReference type="Proteomes" id="UP000694570">
    <property type="component" value="Unplaced"/>
</dbReference>
<dbReference type="Proteomes" id="UP000694571">
    <property type="component" value="Unplaced"/>
</dbReference>
<dbReference type="Proteomes" id="UP000694720">
    <property type="component" value="Unplaced"/>
</dbReference>
<dbReference type="Proteomes" id="UP000694722">
    <property type="component" value="Unplaced"/>
</dbReference>
<dbReference type="Proteomes" id="UP000694723">
    <property type="component" value="Unplaced"/>
</dbReference>
<dbReference type="Proteomes" id="UP000694724">
    <property type="component" value="Unplaced"/>
</dbReference>
<dbReference type="Proteomes" id="UP000694725">
    <property type="component" value="Unplaced"/>
</dbReference>
<dbReference type="Proteomes" id="UP000694726">
    <property type="component" value="Unplaced"/>
</dbReference>
<dbReference type="Proteomes" id="UP000694727">
    <property type="component" value="Unplaced"/>
</dbReference>
<dbReference type="Proteomes" id="UP000694728">
    <property type="component" value="Unplaced"/>
</dbReference>
<dbReference type="Bgee" id="ENSSSCG00000014298">
    <property type="expression patterns" value="Expressed in Ammon's horn and 42 other cell types or tissues"/>
</dbReference>
<dbReference type="ExpressionAtlas" id="P67776">
    <property type="expression patterns" value="baseline and differential"/>
</dbReference>
<dbReference type="GO" id="GO:0000785">
    <property type="term" value="C:chromatin"/>
    <property type="evidence" value="ECO:0000250"/>
    <property type="project" value="UniProtKB"/>
</dbReference>
<dbReference type="GO" id="GO:0000775">
    <property type="term" value="C:chromosome, centromeric region"/>
    <property type="evidence" value="ECO:0007669"/>
    <property type="project" value="UniProtKB-SubCell"/>
</dbReference>
<dbReference type="GO" id="GO:0005829">
    <property type="term" value="C:cytosol"/>
    <property type="evidence" value="ECO:0000318"/>
    <property type="project" value="GO_Central"/>
</dbReference>
<dbReference type="GO" id="GO:0090443">
    <property type="term" value="C:FAR/SIN/STRIPAK complex"/>
    <property type="evidence" value="ECO:0007669"/>
    <property type="project" value="Ensembl"/>
</dbReference>
<dbReference type="GO" id="GO:0160232">
    <property type="term" value="C:INTAC complex"/>
    <property type="evidence" value="ECO:0000250"/>
    <property type="project" value="UniProtKB"/>
</dbReference>
<dbReference type="GO" id="GO:0045121">
    <property type="term" value="C:membrane raft"/>
    <property type="evidence" value="ECO:0000250"/>
    <property type="project" value="UniProtKB"/>
</dbReference>
<dbReference type="GO" id="GO:0005634">
    <property type="term" value="C:nucleus"/>
    <property type="evidence" value="ECO:0000250"/>
    <property type="project" value="UniProtKB"/>
</dbReference>
<dbReference type="GO" id="GO:0005886">
    <property type="term" value="C:plasma membrane"/>
    <property type="evidence" value="ECO:0007669"/>
    <property type="project" value="Ensembl"/>
</dbReference>
<dbReference type="GO" id="GO:0000159">
    <property type="term" value="C:protein phosphatase type 2A complex"/>
    <property type="evidence" value="ECO:0007669"/>
    <property type="project" value="Ensembl"/>
</dbReference>
<dbReference type="GO" id="GO:0000922">
    <property type="term" value="C:spindle pole"/>
    <property type="evidence" value="ECO:0007669"/>
    <property type="project" value="UniProtKB-SubCell"/>
</dbReference>
<dbReference type="GO" id="GO:0045202">
    <property type="term" value="C:synapse"/>
    <property type="evidence" value="ECO:0007669"/>
    <property type="project" value="Ensembl"/>
</dbReference>
<dbReference type="GO" id="GO:0050811">
    <property type="term" value="F:GABA receptor binding"/>
    <property type="evidence" value="ECO:0007669"/>
    <property type="project" value="Ensembl"/>
</dbReference>
<dbReference type="GO" id="GO:0046872">
    <property type="term" value="F:metal ion binding"/>
    <property type="evidence" value="ECO:0007669"/>
    <property type="project" value="UniProtKB-KW"/>
</dbReference>
<dbReference type="GO" id="GO:0046982">
    <property type="term" value="F:protein heterodimerization activity"/>
    <property type="evidence" value="ECO:0000250"/>
    <property type="project" value="UniProtKB"/>
</dbReference>
<dbReference type="GO" id="GO:0019888">
    <property type="term" value="F:protein phosphatase regulator activity"/>
    <property type="evidence" value="ECO:0000250"/>
    <property type="project" value="UniProtKB"/>
</dbReference>
<dbReference type="GO" id="GO:0004722">
    <property type="term" value="F:protein serine/threonine phosphatase activity"/>
    <property type="evidence" value="ECO:0000250"/>
    <property type="project" value="UniProtKB"/>
</dbReference>
<dbReference type="GO" id="GO:0004725">
    <property type="term" value="F:protein tyrosine phosphatase activity"/>
    <property type="evidence" value="ECO:0007669"/>
    <property type="project" value="Ensembl"/>
</dbReference>
<dbReference type="GO" id="GO:0180006">
    <property type="term" value="F:RNA polymerase II CTD heptapeptide repeat S2 phosphatase activity"/>
    <property type="evidence" value="ECO:0000250"/>
    <property type="project" value="UniProtKB"/>
</dbReference>
<dbReference type="GO" id="GO:0180007">
    <property type="term" value="F:RNA polymerase II CTD heptapeptide repeat S5 phosphatase activity"/>
    <property type="evidence" value="ECO:0000250"/>
    <property type="project" value="UniProtKB"/>
</dbReference>
<dbReference type="GO" id="GO:0180008">
    <property type="term" value="F:RNA polymerase II CTD heptapeptide repeat S7 phosphatase activity"/>
    <property type="evidence" value="ECO:0000250"/>
    <property type="project" value="UniProtKB"/>
</dbReference>
<dbReference type="GO" id="GO:0051321">
    <property type="term" value="P:meiotic cell cycle"/>
    <property type="evidence" value="ECO:0007669"/>
    <property type="project" value="UniProtKB-KW"/>
</dbReference>
<dbReference type="GO" id="GO:0007498">
    <property type="term" value="P:mesoderm development"/>
    <property type="evidence" value="ECO:0007669"/>
    <property type="project" value="Ensembl"/>
</dbReference>
<dbReference type="GO" id="GO:0000278">
    <property type="term" value="P:mitotic cell cycle"/>
    <property type="evidence" value="ECO:0000318"/>
    <property type="project" value="GO_Central"/>
</dbReference>
<dbReference type="GO" id="GO:0090090">
    <property type="term" value="P:negative regulation of canonical Wnt signaling pathway"/>
    <property type="evidence" value="ECO:0007669"/>
    <property type="project" value="Ensembl"/>
</dbReference>
<dbReference type="GO" id="GO:0010719">
    <property type="term" value="P:negative regulation of epithelial to mesenchymal transition"/>
    <property type="evidence" value="ECO:0007669"/>
    <property type="project" value="Ensembl"/>
</dbReference>
<dbReference type="GO" id="GO:1904539">
    <property type="term" value="P:negative regulation of glycolytic process through fructose-6-phosphate"/>
    <property type="evidence" value="ECO:0007669"/>
    <property type="project" value="Ensembl"/>
</dbReference>
<dbReference type="GO" id="GO:0035331">
    <property type="term" value="P:negative regulation of hippo signaling"/>
    <property type="evidence" value="ECO:0000250"/>
    <property type="project" value="UniProtKB"/>
</dbReference>
<dbReference type="GO" id="GO:0051898">
    <property type="term" value="P:negative regulation of phosphatidylinositol 3-kinase/protein kinase B signal transduction"/>
    <property type="evidence" value="ECO:0000250"/>
    <property type="project" value="UniProtKB"/>
</dbReference>
<dbReference type="GO" id="GO:1900227">
    <property type="term" value="P:positive regulation of NLRP3 inflammasome complex assembly"/>
    <property type="evidence" value="ECO:0000250"/>
    <property type="project" value="UniProtKB"/>
</dbReference>
<dbReference type="GO" id="GO:0006470">
    <property type="term" value="P:protein dephosphorylation"/>
    <property type="evidence" value="ECO:0000250"/>
    <property type="project" value="UniProtKB"/>
</dbReference>
<dbReference type="GO" id="GO:2000045">
    <property type="term" value="P:regulation of G1/S transition of mitotic cell cycle"/>
    <property type="evidence" value="ECO:0007669"/>
    <property type="project" value="Ensembl"/>
</dbReference>
<dbReference type="GO" id="GO:0160240">
    <property type="term" value="P:RNA polymerase II transcription initiation surveillance"/>
    <property type="evidence" value="ECO:0000250"/>
    <property type="project" value="UniProtKB"/>
</dbReference>
<dbReference type="GO" id="GO:0043029">
    <property type="term" value="P:T cell homeostasis"/>
    <property type="evidence" value="ECO:0000250"/>
    <property type="project" value="UniProtKB"/>
</dbReference>
<dbReference type="CDD" id="cd07415">
    <property type="entry name" value="MPP_PP2A_PP4_PP6"/>
    <property type="match status" value="1"/>
</dbReference>
<dbReference type="FunFam" id="3.60.21.10:FF:000003">
    <property type="entry name" value="Serine/threonine-protein phosphatase"/>
    <property type="match status" value="1"/>
</dbReference>
<dbReference type="Gene3D" id="3.60.21.10">
    <property type="match status" value="1"/>
</dbReference>
<dbReference type="InterPro" id="IPR004843">
    <property type="entry name" value="Calcineurin-like_PHP_ApaH"/>
</dbReference>
<dbReference type="InterPro" id="IPR029052">
    <property type="entry name" value="Metallo-depent_PP-like"/>
</dbReference>
<dbReference type="InterPro" id="IPR047129">
    <property type="entry name" value="PPA2-like"/>
</dbReference>
<dbReference type="InterPro" id="IPR006186">
    <property type="entry name" value="Ser/Thr-sp_prot-phosphatase"/>
</dbReference>
<dbReference type="PANTHER" id="PTHR45619">
    <property type="entry name" value="SERINE/THREONINE-PROTEIN PHOSPHATASE PP2A-RELATED"/>
    <property type="match status" value="1"/>
</dbReference>
<dbReference type="Pfam" id="PF00149">
    <property type="entry name" value="Metallophos"/>
    <property type="match status" value="1"/>
</dbReference>
<dbReference type="PRINTS" id="PR00114">
    <property type="entry name" value="STPHPHTASE"/>
</dbReference>
<dbReference type="SMART" id="SM00156">
    <property type="entry name" value="PP2Ac"/>
    <property type="match status" value="1"/>
</dbReference>
<dbReference type="SUPFAM" id="SSF56300">
    <property type="entry name" value="Metallo-dependent phosphatases"/>
    <property type="match status" value="1"/>
</dbReference>
<dbReference type="PROSITE" id="PS00125">
    <property type="entry name" value="SER_THR_PHOSPHATASE"/>
    <property type="match status" value="1"/>
</dbReference>
<name>PP2AA_PIG</name>
<evidence type="ECO:0000250" key="1">
    <source>
        <dbReference type="UniProtKB" id="P36873"/>
    </source>
</evidence>
<evidence type="ECO:0000250" key="2">
    <source>
        <dbReference type="UniProtKB" id="P63330"/>
    </source>
</evidence>
<evidence type="ECO:0000250" key="3">
    <source>
        <dbReference type="UniProtKB" id="P67774"/>
    </source>
</evidence>
<evidence type="ECO:0000250" key="4">
    <source>
        <dbReference type="UniProtKB" id="P67775"/>
    </source>
</evidence>
<evidence type="ECO:0000305" key="5"/>
<gene>
    <name type="primary">PPP2CA</name>
</gene>
<keyword id="KW-0137">Centromere</keyword>
<keyword id="KW-0158">Chromosome</keyword>
<keyword id="KW-0963">Cytoplasm</keyword>
<keyword id="KW-0206">Cytoskeleton</keyword>
<keyword id="KW-0378">Hydrolase</keyword>
<keyword id="KW-0408">Iron</keyword>
<keyword id="KW-0464">Manganese</keyword>
<keyword id="KW-0469">Meiosis</keyword>
<keyword id="KW-0479">Metal-binding</keyword>
<keyword id="KW-0488">Methylation</keyword>
<keyword id="KW-0539">Nucleus</keyword>
<keyword id="KW-0597">Phosphoprotein</keyword>
<keyword id="KW-0904">Protein phosphatase</keyword>
<keyword id="KW-1185">Reference proteome</keyword>
<keyword id="KW-0832">Ubl conjugation</keyword>
<keyword id="KW-0862">Zinc</keyword>
<organism>
    <name type="scientific">Sus scrofa</name>
    <name type="common">Pig</name>
    <dbReference type="NCBI Taxonomy" id="9823"/>
    <lineage>
        <taxon>Eukaryota</taxon>
        <taxon>Metazoa</taxon>
        <taxon>Chordata</taxon>
        <taxon>Craniata</taxon>
        <taxon>Vertebrata</taxon>
        <taxon>Euteleostomi</taxon>
        <taxon>Mammalia</taxon>
        <taxon>Eutheria</taxon>
        <taxon>Laurasiatheria</taxon>
        <taxon>Artiodactyla</taxon>
        <taxon>Suina</taxon>
        <taxon>Suidae</taxon>
        <taxon>Sus</taxon>
    </lineage>
</organism>
<reference key="1">
    <citation type="journal article" date="1987" name="Biochemistry">
        <title>Molecular cloning of cDNAs encoding two isoforms of the catalytic subunit of protein phosphatase 2A.</title>
        <authorList>
            <person name="Stone S.R."/>
            <person name="Hofsteenge J."/>
            <person name="Hemmings B.A."/>
        </authorList>
    </citation>
    <scope>NUCLEOTIDE SEQUENCE [MRNA]</scope>
    <source>
        <tissue>Kidney</tissue>
    </source>
</reference>
<comment type="function">
    <text evidence="2 4">Catalytic subunit of protein phosphatase 2A (PP2A), a serine/threonine phosphatase involved in the regulation of a wide variety of enzymes, signal transduction pathways, and cellular events. PP2A is the major phosphatase for microtubule-associated proteins (MAPs). PP2A can modulate the activity of phosphorylase B kinase casein kinase 2, mitogen-stimulated S6 kinase, and MAP-2 kinase (By similarity). Cooperates with SGO2 to protect centromeric cohesin from separase-mediated cleavage in oocytes specifically during meiosis I (By similarity). Can dephosphorylate various proteins, such as AXIN1, p53/TP53, PIM3, WEE1. Activates RAF1 by dephosphorylating it at 'Ser-259'. Mediates dephosphorylation of WEE1, preventing its ubiquitin-mediated proteolysis, increasing WEE1 protein levels, and promoting the G2/M checkpoint. Mediates dephosphorylation of MYC; promoting its ubiquitin-mediated proteolysis: interaction with AMBRA1 enhances interaction between PPP2CA and MYC. Mediates dephosphorylation of FOXO3; promoting its stabilization: interaction with AMBRA1 enhances interaction between PPP2CA and FOXO3 (By similarity). Catalyzes dephosphorylation of the pyrin domain of NLRP3, promoting assembly of the NLRP3 inflammasome. Together with RACK1 adapter, mediates dephosphorylation of AKT1 at 'Ser-473', preventing AKT1 activation and AKT-mTOR signaling pathway. Dephosphorylation of AKT1 is essential for regulatory T-cells (Treg) homeostasis and stability (By similarity). Catalyzes dephosphorylation of PIM3, promotinh PIM3 ubiquitination and proteasomal degradation. Part of the striatin-interacting phosphatase and kinase (STRIPAK) complexes. STRIPAK complexes have critical roles in protein (de)phosphorylation and are regulators of multiple signaling pathways including Hippo, MAPK, nuclear receptor and cytoskeleton remodeling. Different types of STRIPAK complexes are involved in a variety of biological processes such as cell growth, differentiation, apoptosis, metabolism and immune regulation. Key mediator of a quality checkpoint during transcription elongation as part of the Integrator-PP2A (INTAC) complex. The INTAC complex drives premature transcription termination of transcripts that are unfavorably configured for transcriptional elongation: within the INTAC complex, PPP2CA catalyzes dephosphorylation of the C-terminal domain (CTD) of Pol II subunit POLR2A/RPB1 and SUPT5H/SPT5, thereby preventing transcriptional elongation (By similarity).</text>
</comment>
<comment type="catalytic activity">
    <reaction evidence="4">
        <text>O-phospho-L-seryl-[protein] + H2O = L-seryl-[protein] + phosphate</text>
        <dbReference type="Rhea" id="RHEA:20629"/>
        <dbReference type="Rhea" id="RHEA-COMP:9863"/>
        <dbReference type="Rhea" id="RHEA-COMP:11604"/>
        <dbReference type="ChEBI" id="CHEBI:15377"/>
        <dbReference type="ChEBI" id="CHEBI:29999"/>
        <dbReference type="ChEBI" id="CHEBI:43474"/>
        <dbReference type="ChEBI" id="CHEBI:83421"/>
        <dbReference type="EC" id="3.1.3.16"/>
    </reaction>
</comment>
<comment type="catalytic activity">
    <reaction evidence="4">
        <text>O-phospho-L-threonyl-[protein] + H2O = L-threonyl-[protein] + phosphate</text>
        <dbReference type="Rhea" id="RHEA:47004"/>
        <dbReference type="Rhea" id="RHEA-COMP:11060"/>
        <dbReference type="Rhea" id="RHEA-COMP:11605"/>
        <dbReference type="ChEBI" id="CHEBI:15377"/>
        <dbReference type="ChEBI" id="CHEBI:30013"/>
        <dbReference type="ChEBI" id="CHEBI:43474"/>
        <dbReference type="ChEBI" id="CHEBI:61977"/>
        <dbReference type="EC" id="3.1.3.16"/>
    </reaction>
</comment>
<comment type="cofactor">
    <cofactor evidence="4">
        <name>Mn(2+)</name>
        <dbReference type="ChEBI" id="CHEBI:29035"/>
    </cofactor>
    <cofactor evidence="4">
        <name>Fe(3+)</name>
        <dbReference type="ChEBI" id="CHEBI:29034"/>
    </cofactor>
    <cofactor evidence="4">
        <name>Zn(2+)</name>
        <dbReference type="ChEBI" id="CHEBI:29105"/>
    </cofactor>
    <text evidence="4">Binds 2 metal ions per subunit. Can be two manganese ions, or one iron ion and one zinc ion.</text>
</comment>
<comment type="activity regulation">
    <text evidence="4">Inhibited by the interaction between PPP2R2A and ARPP19; this inhibition is enhanced when ARPP19 is phosphorylated (By similarity). Inhibited by the interaction between PPP2R2A and PABIR1/FAM122A (By similarity).</text>
</comment>
<comment type="subunit">
    <text evidence="2 4">PP2A consists of a common heterodimeric core enzyme composed of PPP2CA, a 36 kDa catalytic subunit (subunit C), and PPP2R1A, a 65 kDa constant regulatory subunit (PR65 or subunit A), that associates with a variety of regulatory subunits. Proteins that associate with the core dimer include three families of regulatory subunits B (the R2/B/PR55/B55, R3/B''/PR72/PR130/PR59 and R5/B'/B56 families), the 48 kDa variable regulatory subunit, viral proteins, and cell signaling molecules. Interacts with the PP2A A subunit PPP2R1A. Interacts with the regulatory subunit PPP2R2A. Interacts (via C-terminus) with PTPA (By similarity). Interacts with NXN; the interaction is direct (By similarity). Interacts with KCTD20 (By similarity). Interacts with BTBD10 (By similarity). Interacts with SGO1 and SGO2. Interacts with RAF1. Interaction with IGBP1 protects unassembled PPP2CA from degradative ubiquitination. Interacts with GSK3B (via C2 domain). Interacts with MFHAS1; retains PPP2CA into the cytoplasm and excludes it from the nucleus. Interacts with PABIR1/FAM122A. Interacts with ADCY8; interaction is phosphatase activity-dependent; antagonizes interaction between ADCY8 and calmodulin. Interacts with CRTC3 (when phosphorylated at 'Ser-391'). Interacts with SPRY2; the interaction is inhibited by TESK1 interaction with SPRY2, possibly by vesicular sequestration of SPRY2. Interacts with TRAF3IP3. Interacts with AMBRA1 (via PxP motifs); enhancing interaction between PPP2CA and MYC or FOXO3. Forms a complex with AMBRA1 and BECN1; AMBRA1 and BECN1 components of the complex regulate MYC stability via different pathways. Part of the core of STRIPAK complexes composed of PP2A catalytic and scaffolding subunits, the striatins (PP2A regulatory subunits), the striatin-associated proteins MOB4, STRIP1 and STRIP2, PDCD10 and members of the STE20 kinases, such as STK24 and STK26. Phosphatase component of the Integrator-PP2A (INTAC) complex, composed of the Integrator core complex and protein phosphatase 2A subunits PPP2CA and PPP2R1A (By similarity).</text>
</comment>
<comment type="subcellular location">
    <subcellularLocation>
        <location evidence="4">Cytoplasm</location>
    </subcellularLocation>
    <subcellularLocation>
        <location evidence="4">Nucleus</location>
    </subcellularLocation>
    <subcellularLocation>
        <location evidence="4">Chromosome</location>
    </subcellularLocation>
    <subcellularLocation>
        <location evidence="4">Chromosome</location>
        <location evidence="4">Centromere</location>
    </subcellularLocation>
    <subcellularLocation>
        <location evidence="4">Cytoplasm</location>
        <location evidence="4">Cytoskeleton</location>
        <location evidence="4">Spindle pole</location>
    </subcellularLocation>
    <text evidence="2 4">In prometaphase cells, but not in anaphase cells, localizes at centromeres. During mitosis, also found at spindle poles (By similarity). Centromeric localization requires the presence of SGO2 (By similarity). Recruited to chromatin and transcription pause-release checkpoint via its association with the Integrator complex (By similarity).</text>
</comment>
<comment type="PTM">
    <text evidence="3">Reversibly methyl esterified on Leu-309 by leucine carboxyl methyltransferase 1 (LCMT1) and protein phosphatase methylesterase 1 (PPME1). Carboxyl methylation influences the affinity of the catalytic subunit for the different regulatory subunits, thereby modulating the PP2A holoenzyme's substrate specificity, enzyme activity and cellular localization (By similarity).</text>
</comment>
<comment type="PTM">
    <text evidence="3">Phosphorylation of either threonine (by autophosphorylation-activated protein kinase) or tyrosine results in inactivation of the phosphatase. Auto-dephosphorylation has been suggested as a mechanism for reactivation (By similarity).</text>
</comment>
<comment type="PTM">
    <text evidence="4">Polyubiquitinated, leading to its degradation by the proteasome.</text>
</comment>
<comment type="similarity">
    <text evidence="5">Belongs to the PPP phosphatase family. PP-1 subfamily.</text>
</comment>
<protein>
    <recommendedName>
        <fullName>Serine/threonine-protein phosphatase 2A catalytic subunit alpha isoform</fullName>
        <shortName>PP2A-alpha</shortName>
        <ecNumber evidence="4">3.1.3.16</ecNumber>
    </recommendedName>
</protein>
<sequence length="309" mass="35594">MDEKVFTKELDQWIEQLNECKQLSESQVKSLCEKAKEILTKESNVQEVRCPVTVCGDVHGQFHDLMELFRIGGKSPDTNYLFMGDYVDRGYYSVETVTLLVALKVRYRERITILRGNHESRQITQVYGFYDECLRKYGNANVWKYFTDLFDYLPLTALVDGQIFCLHGGLSPSIDTLDHIRALDRLQEVPHEGPMCDLLWSDPDDRGGWGISPRGAGYTFGQDISETFNHANGLTLVSRAHQLVMEGYNWCHDRNVVTIFSAPNYCYRCGNQAAIMELDDTLKYSFLQFDPAPRRGEPHVTRRTPDYFL</sequence>
<proteinExistence type="evidence at transcript level"/>
<accession>P67776</accession>
<accession>P05323</accession>
<accession>P13197</accession>
<feature type="chain" id="PRO_0000058841" description="Serine/threonine-protein phosphatase 2A catalytic subunit alpha isoform">
    <location>
        <begin position="1"/>
        <end position="309"/>
    </location>
</feature>
<feature type="active site" description="Proton donor" evidence="1">
    <location>
        <position position="118"/>
    </location>
</feature>
<feature type="binding site" evidence="4">
    <location>
        <position position="57"/>
    </location>
    <ligand>
        <name>Mn(2+)</name>
        <dbReference type="ChEBI" id="CHEBI:29035"/>
        <label>1</label>
    </ligand>
</feature>
<feature type="binding site" evidence="4">
    <location>
        <position position="57"/>
    </location>
    <ligand>
        <name>Zn(2+)</name>
        <dbReference type="ChEBI" id="CHEBI:29105"/>
    </ligand>
</feature>
<feature type="binding site" evidence="4">
    <location>
        <position position="59"/>
    </location>
    <ligand>
        <name>Mn(2+)</name>
        <dbReference type="ChEBI" id="CHEBI:29035"/>
        <label>1</label>
    </ligand>
</feature>
<feature type="binding site" evidence="4">
    <location>
        <position position="59"/>
    </location>
    <ligand>
        <name>Zn(2+)</name>
        <dbReference type="ChEBI" id="CHEBI:29105"/>
    </ligand>
</feature>
<feature type="binding site" evidence="4">
    <location>
        <position position="85"/>
    </location>
    <ligand>
        <name>Fe(3+)</name>
        <dbReference type="ChEBI" id="CHEBI:29034"/>
    </ligand>
</feature>
<feature type="binding site" evidence="4">
    <location>
        <position position="85"/>
    </location>
    <ligand>
        <name>Mn(2+)</name>
        <dbReference type="ChEBI" id="CHEBI:29035"/>
        <label>1</label>
    </ligand>
</feature>
<feature type="binding site" evidence="4">
    <location>
        <position position="85"/>
    </location>
    <ligand>
        <name>Mn(2+)</name>
        <dbReference type="ChEBI" id="CHEBI:29035"/>
        <label>2</label>
    </ligand>
</feature>
<feature type="binding site" evidence="4">
    <location>
        <position position="85"/>
    </location>
    <ligand>
        <name>Zn(2+)</name>
        <dbReference type="ChEBI" id="CHEBI:29105"/>
    </ligand>
</feature>
<feature type="binding site" evidence="4">
    <location>
        <position position="117"/>
    </location>
    <ligand>
        <name>Fe(3+)</name>
        <dbReference type="ChEBI" id="CHEBI:29034"/>
    </ligand>
</feature>
<feature type="binding site" evidence="4">
    <location>
        <position position="117"/>
    </location>
    <ligand>
        <name>Mn(2+)</name>
        <dbReference type="ChEBI" id="CHEBI:29035"/>
        <label>2</label>
    </ligand>
</feature>
<feature type="binding site" evidence="4">
    <location>
        <position position="167"/>
    </location>
    <ligand>
        <name>Fe(3+)</name>
        <dbReference type="ChEBI" id="CHEBI:29034"/>
    </ligand>
</feature>
<feature type="binding site" evidence="4">
    <location>
        <position position="167"/>
    </location>
    <ligand>
        <name>Mn(2+)</name>
        <dbReference type="ChEBI" id="CHEBI:29035"/>
        <label>2</label>
    </ligand>
</feature>
<feature type="binding site" evidence="4">
    <location>
        <position position="241"/>
    </location>
    <ligand>
        <name>Fe(3+)</name>
        <dbReference type="ChEBI" id="CHEBI:29034"/>
    </ligand>
</feature>
<feature type="binding site" evidence="4">
    <location>
        <position position="241"/>
    </location>
    <ligand>
        <name>Mn(2+)</name>
        <dbReference type="ChEBI" id="CHEBI:29035"/>
        <label>2</label>
    </ligand>
</feature>
<feature type="modified residue" description="Phosphotyrosine" evidence="3">
    <location>
        <position position="307"/>
    </location>
</feature>
<feature type="modified residue" description="Leucine methyl ester" evidence="3">
    <location>
        <position position="309"/>
    </location>
</feature>